<accession>Q8EPB9</accession>
<evidence type="ECO:0000255" key="1">
    <source>
        <dbReference type="HAMAP-Rule" id="MF_00020"/>
    </source>
</evidence>
<organism>
    <name type="scientific">Oceanobacillus iheyensis (strain DSM 14371 / CIP 107618 / JCM 11309 / KCTC 3954 / HTE831)</name>
    <dbReference type="NCBI Taxonomy" id="221109"/>
    <lineage>
        <taxon>Bacteria</taxon>
        <taxon>Bacillati</taxon>
        <taxon>Bacillota</taxon>
        <taxon>Bacilli</taxon>
        <taxon>Bacillales</taxon>
        <taxon>Bacillaceae</taxon>
        <taxon>Oceanobacillus</taxon>
    </lineage>
</organism>
<sequence>MSNVLAINAGSSSLKFQLIKMPEEQVIAKGLVERIGMPDAIFSVEADGEKDKKVTEIADHSVAVKMLLESLTSTGVIQSFDEIDAVGHRVVHGGEYFSDSVLITDEIIQQIEEISELAPLHNPANLTGIHAFKEILPEIPMVAVFDTAFHQSMPEASYMYSLPREYYEEYGIRKYGFHGTSHKYVSERAADLLGVPLSNLRLISCHIGNGASVTAIKDGESIDTSMGFTPLAGVTMGTRSGNIDPALIPYIMDKTGKTADEVLNVLNKESGMLALSGFSSDLRDIEEKSETDARAELALDVFAGRIHKYIGSYAAKMNGLDAIIFTAGVGENSVTIREKILTGLEFMGIYWDPKLNDVRGKEQFINYPHSPVKVIIIPTNEEAMIAKDTVRLSGLNS</sequence>
<name>ACKA_OCEIH</name>
<gene>
    <name evidence="1" type="primary">ackA</name>
    <name type="ordered locus">OB2191</name>
</gene>
<protein>
    <recommendedName>
        <fullName evidence="1">Acetate kinase</fullName>
        <ecNumber evidence="1">2.7.2.1</ecNumber>
    </recommendedName>
    <alternativeName>
        <fullName evidence="1">Acetokinase</fullName>
    </alternativeName>
</protein>
<proteinExistence type="inferred from homology"/>
<keyword id="KW-0067">ATP-binding</keyword>
<keyword id="KW-0963">Cytoplasm</keyword>
<keyword id="KW-0418">Kinase</keyword>
<keyword id="KW-0460">Magnesium</keyword>
<keyword id="KW-0479">Metal-binding</keyword>
<keyword id="KW-0547">Nucleotide-binding</keyword>
<keyword id="KW-1185">Reference proteome</keyword>
<keyword id="KW-0808">Transferase</keyword>
<feature type="chain" id="PRO_0000107595" description="Acetate kinase">
    <location>
        <begin position="1"/>
        <end position="397"/>
    </location>
</feature>
<feature type="active site" description="Proton donor/acceptor" evidence="1">
    <location>
        <position position="146"/>
    </location>
</feature>
<feature type="binding site" evidence="1">
    <location>
        <position position="8"/>
    </location>
    <ligand>
        <name>Mg(2+)</name>
        <dbReference type="ChEBI" id="CHEBI:18420"/>
    </ligand>
</feature>
<feature type="binding site" evidence="1">
    <location>
        <position position="15"/>
    </location>
    <ligand>
        <name>ATP</name>
        <dbReference type="ChEBI" id="CHEBI:30616"/>
    </ligand>
</feature>
<feature type="binding site" evidence="1">
    <location>
        <position position="89"/>
    </location>
    <ligand>
        <name>substrate</name>
    </ligand>
</feature>
<feature type="binding site" evidence="1">
    <location>
        <begin position="206"/>
        <end position="210"/>
    </location>
    <ligand>
        <name>ATP</name>
        <dbReference type="ChEBI" id="CHEBI:30616"/>
    </ligand>
</feature>
<feature type="binding site" evidence="1">
    <location>
        <begin position="281"/>
        <end position="283"/>
    </location>
    <ligand>
        <name>ATP</name>
        <dbReference type="ChEBI" id="CHEBI:30616"/>
    </ligand>
</feature>
<feature type="binding site" evidence="1">
    <location>
        <begin position="328"/>
        <end position="332"/>
    </location>
    <ligand>
        <name>ATP</name>
        <dbReference type="ChEBI" id="CHEBI:30616"/>
    </ligand>
</feature>
<feature type="binding site" evidence="1">
    <location>
        <position position="381"/>
    </location>
    <ligand>
        <name>Mg(2+)</name>
        <dbReference type="ChEBI" id="CHEBI:18420"/>
    </ligand>
</feature>
<feature type="site" description="Transition state stabilizer" evidence="1">
    <location>
        <position position="178"/>
    </location>
</feature>
<feature type="site" description="Transition state stabilizer" evidence="1">
    <location>
        <position position="239"/>
    </location>
</feature>
<dbReference type="EC" id="2.7.2.1" evidence="1"/>
<dbReference type="EMBL" id="BA000028">
    <property type="protein sequence ID" value="BAC14147.1"/>
    <property type="molecule type" value="Genomic_DNA"/>
</dbReference>
<dbReference type="RefSeq" id="WP_011066585.1">
    <property type="nucleotide sequence ID" value="NC_004193.1"/>
</dbReference>
<dbReference type="SMR" id="Q8EPB9"/>
<dbReference type="STRING" id="221109.gene:10734439"/>
<dbReference type="KEGG" id="oih:OB2191"/>
<dbReference type="eggNOG" id="COG0282">
    <property type="taxonomic scope" value="Bacteria"/>
</dbReference>
<dbReference type="HOGENOM" id="CLU_020352_0_1_9"/>
<dbReference type="OrthoDB" id="9802453at2"/>
<dbReference type="PhylomeDB" id="Q8EPB9"/>
<dbReference type="UniPathway" id="UPA00340">
    <property type="reaction ID" value="UER00458"/>
</dbReference>
<dbReference type="Proteomes" id="UP000000822">
    <property type="component" value="Chromosome"/>
</dbReference>
<dbReference type="GO" id="GO:0005737">
    <property type="term" value="C:cytoplasm"/>
    <property type="evidence" value="ECO:0007669"/>
    <property type="project" value="UniProtKB-SubCell"/>
</dbReference>
<dbReference type="GO" id="GO:0008776">
    <property type="term" value="F:acetate kinase activity"/>
    <property type="evidence" value="ECO:0007669"/>
    <property type="project" value="UniProtKB-UniRule"/>
</dbReference>
<dbReference type="GO" id="GO:0005524">
    <property type="term" value="F:ATP binding"/>
    <property type="evidence" value="ECO:0007669"/>
    <property type="project" value="UniProtKB-KW"/>
</dbReference>
<dbReference type="GO" id="GO:0000287">
    <property type="term" value="F:magnesium ion binding"/>
    <property type="evidence" value="ECO:0007669"/>
    <property type="project" value="UniProtKB-UniRule"/>
</dbReference>
<dbReference type="GO" id="GO:0006083">
    <property type="term" value="P:acetate metabolic process"/>
    <property type="evidence" value="ECO:0007669"/>
    <property type="project" value="TreeGrafter"/>
</dbReference>
<dbReference type="GO" id="GO:0006085">
    <property type="term" value="P:acetyl-CoA biosynthetic process"/>
    <property type="evidence" value="ECO:0007669"/>
    <property type="project" value="UniProtKB-UniRule"/>
</dbReference>
<dbReference type="CDD" id="cd24010">
    <property type="entry name" value="ASKHA_NBD_AcK_PK"/>
    <property type="match status" value="1"/>
</dbReference>
<dbReference type="Gene3D" id="3.30.420.40">
    <property type="match status" value="2"/>
</dbReference>
<dbReference type="HAMAP" id="MF_00020">
    <property type="entry name" value="Acetate_kinase"/>
    <property type="match status" value="1"/>
</dbReference>
<dbReference type="InterPro" id="IPR004372">
    <property type="entry name" value="Ac/propionate_kinase"/>
</dbReference>
<dbReference type="InterPro" id="IPR000890">
    <property type="entry name" value="Aliphatic_acid_kin_short-chain"/>
</dbReference>
<dbReference type="InterPro" id="IPR023865">
    <property type="entry name" value="Aliphatic_acid_kinase_CS"/>
</dbReference>
<dbReference type="InterPro" id="IPR043129">
    <property type="entry name" value="ATPase_NBD"/>
</dbReference>
<dbReference type="NCBIfam" id="TIGR00016">
    <property type="entry name" value="ackA"/>
    <property type="match status" value="1"/>
</dbReference>
<dbReference type="PANTHER" id="PTHR21060">
    <property type="entry name" value="ACETATE KINASE"/>
    <property type="match status" value="1"/>
</dbReference>
<dbReference type="PANTHER" id="PTHR21060:SF15">
    <property type="entry name" value="ACETATE KINASE-RELATED"/>
    <property type="match status" value="1"/>
</dbReference>
<dbReference type="Pfam" id="PF00871">
    <property type="entry name" value="Acetate_kinase"/>
    <property type="match status" value="1"/>
</dbReference>
<dbReference type="PIRSF" id="PIRSF000722">
    <property type="entry name" value="Acetate_prop_kin"/>
    <property type="match status" value="1"/>
</dbReference>
<dbReference type="PRINTS" id="PR00471">
    <property type="entry name" value="ACETATEKNASE"/>
</dbReference>
<dbReference type="SUPFAM" id="SSF53067">
    <property type="entry name" value="Actin-like ATPase domain"/>
    <property type="match status" value="2"/>
</dbReference>
<dbReference type="PROSITE" id="PS01075">
    <property type="entry name" value="ACETATE_KINASE_1"/>
    <property type="match status" value="1"/>
</dbReference>
<dbReference type="PROSITE" id="PS01076">
    <property type="entry name" value="ACETATE_KINASE_2"/>
    <property type="match status" value="1"/>
</dbReference>
<reference key="1">
    <citation type="journal article" date="2002" name="Nucleic Acids Res.">
        <title>Genome sequence of Oceanobacillus iheyensis isolated from the Iheya Ridge and its unexpected adaptive capabilities to extreme environments.</title>
        <authorList>
            <person name="Takami H."/>
            <person name="Takaki Y."/>
            <person name="Uchiyama I."/>
        </authorList>
    </citation>
    <scope>NUCLEOTIDE SEQUENCE [LARGE SCALE GENOMIC DNA]</scope>
    <source>
        <strain>DSM 14371 / CIP 107618 / JCM 11309 / KCTC 3954 / HTE831</strain>
    </source>
</reference>
<comment type="function">
    <text evidence="1">Catalyzes the formation of acetyl phosphate from acetate and ATP. Can also catalyze the reverse reaction.</text>
</comment>
<comment type="catalytic activity">
    <reaction evidence="1">
        <text>acetate + ATP = acetyl phosphate + ADP</text>
        <dbReference type="Rhea" id="RHEA:11352"/>
        <dbReference type="ChEBI" id="CHEBI:22191"/>
        <dbReference type="ChEBI" id="CHEBI:30089"/>
        <dbReference type="ChEBI" id="CHEBI:30616"/>
        <dbReference type="ChEBI" id="CHEBI:456216"/>
        <dbReference type="EC" id="2.7.2.1"/>
    </reaction>
</comment>
<comment type="cofactor">
    <cofactor evidence="1">
        <name>Mg(2+)</name>
        <dbReference type="ChEBI" id="CHEBI:18420"/>
    </cofactor>
    <cofactor evidence="1">
        <name>Mn(2+)</name>
        <dbReference type="ChEBI" id="CHEBI:29035"/>
    </cofactor>
    <text evidence="1">Mg(2+). Can also accept Mn(2+).</text>
</comment>
<comment type="pathway">
    <text evidence="1">Metabolic intermediate biosynthesis; acetyl-CoA biosynthesis; acetyl-CoA from acetate: step 1/2.</text>
</comment>
<comment type="subunit">
    <text evidence="1">Homodimer.</text>
</comment>
<comment type="subcellular location">
    <subcellularLocation>
        <location evidence="1">Cytoplasm</location>
    </subcellularLocation>
</comment>
<comment type="similarity">
    <text evidence="1">Belongs to the acetokinase family.</text>
</comment>